<gene>
    <name type="primary">psvA</name>
    <name type="synonym">EB4</name>
    <name type="ORF">DDB_G0276869</name>
</gene>
<reference key="1">
    <citation type="journal article" date="1991" name="Biochem. Biophys. Res. Commun.">
        <title>Library-independent cloning of genomic fragments adjacent to vector integration sites: isolation of the EB4-PSV gene from a Dictyostelium gene disruption transformant.</title>
        <authorList>
            <person name="Hildebrandt M."/>
            <person name="Nellen W."/>
        </authorList>
    </citation>
    <scope>NUCLEOTIDE SEQUENCE [GENOMIC DNA]</scope>
    <source>
        <strain>AX2</strain>
    </source>
</reference>
<reference key="2">
    <citation type="journal article" date="1991" name="Dev. Genet.">
        <title>Structure, expression, and inactivation by gene disruption of the Dictyostelium discoideum prespore gene EB4.</title>
        <authorList>
            <person name="Hildebrandt M."/>
            <person name="Saur U."/>
            <person name="Nellen W."/>
        </authorList>
    </citation>
    <scope>NUCLEOTIDE SEQUENCE [GENOMIC DNA]</scope>
    <source>
        <strain>AX2</strain>
    </source>
</reference>
<reference key="3">
    <citation type="journal article" date="2002" name="Nature">
        <title>Sequence and analysis of chromosome 2 of Dictyostelium discoideum.</title>
        <authorList>
            <person name="Gloeckner G."/>
            <person name="Eichinger L."/>
            <person name="Szafranski K."/>
            <person name="Pachebat J.A."/>
            <person name="Bankier A.T."/>
            <person name="Dear P.H."/>
            <person name="Lehmann R."/>
            <person name="Baumgart C."/>
            <person name="Parra G."/>
            <person name="Abril J.F."/>
            <person name="Guigo R."/>
            <person name="Kumpf K."/>
            <person name="Tunggal B."/>
            <person name="Cox E.C."/>
            <person name="Quail M.A."/>
            <person name="Platzer M."/>
            <person name="Rosenthal A."/>
            <person name="Noegel A.A."/>
        </authorList>
    </citation>
    <scope>NUCLEOTIDE SEQUENCE [LARGE SCALE GENOMIC DNA]</scope>
    <source>
        <strain>AX4</strain>
    </source>
</reference>
<reference key="4">
    <citation type="journal article" date="2005" name="Nature">
        <title>The genome of the social amoeba Dictyostelium discoideum.</title>
        <authorList>
            <person name="Eichinger L."/>
            <person name="Pachebat J.A."/>
            <person name="Gloeckner G."/>
            <person name="Rajandream M.A."/>
            <person name="Sucgang R."/>
            <person name="Berriman M."/>
            <person name="Song J."/>
            <person name="Olsen R."/>
            <person name="Szafranski K."/>
            <person name="Xu Q."/>
            <person name="Tunggal B."/>
            <person name="Kummerfeld S."/>
            <person name="Madera M."/>
            <person name="Konfortov B.A."/>
            <person name="Rivero F."/>
            <person name="Bankier A.T."/>
            <person name="Lehmann R."/>
            <person name="Hamlin N."/>
            <person name="Davies R."/>
            <person name="Gaudet P."/>
            <person name="Fey P."/>
            <person name="Pilcher K."/>
            <person name="Chen G."/>
            <person name="Saunders D."/>
            <person name="Sodergren E.J."/>
            <person name="Davis P."/>
            <person name="Kerhornou A."/>
            <person name="Nie X."/>
            <person name="Hall N."/>
            <person name="Anjard C."/>
            <person name="Hemphill L."/>
            <person name="Bason N."/>
            <person name="Farbrother P."/>
            <person name="Desany B."/>
            <person name="Just E."/>
            <person name="Morio T."/>
            <person name="Rost R."/>
            <person name="Churcher C.M."/>
            <person name="Cooper J."/>
            <person name="Haydock S."/>
            <person name="van Driessche N."/>
            <person name="Cronin A."/>
            <person name="Goodhead I."/>
            <person name="Muzny D.M."/>
            <person name="Mourier T."/>
            <person name="Pain A."/>
            <person name="Lu M."/>
            <person name="Harper D."/>
            <person name="Lindsay R."/>
            <person name="Hauser H."/>
            <person name="James K.D."/>
            <person name="Quiles M."/>
            <person name="Madan Babu M."/>
            <person name="Saito T."/>
            <person name="Buchrieser C."/>
            <person name="Wardroper A."/>
            <person name="Felder M."/>
            <person name="Thangavelu M."/>
            <person name="Johnson D."/>
            <person name="Knights A."/>
            <person name="Loulseged H."/>
            <person name="Mungall K.L."/>
            <person name="Oliver K."/>
            <person name="Price C."/>
            <person name="Quail M.A."/>
            <person name="Urushihara H."/>
            <person name="Hernandez J."/>
            <person name="Rabbinowitsch E."/>
            <person name="Steffen D."/>
            <person name="Sanders M."/>
            <person name="Ma J."/>
            <person name="Kohara Y."/>
            <person name="Sharp S."/>
            <person name="Simmonds M.N."/>
            <person name="Spiegler S."/>
            <person name="Tivey A."/>
            <person name="Sugano S."/>
            <person name="White B."/>
            <person name="Walker D."/>
            <person name="Woodward J.R."/>
            <person name="Winckler T."/>
            <person name="Tanaka Y."/>
            <person name="Shaulsky G."/>
            <person name="Schleicher M."/>
            <person name="Weinstock G.M."/>
            <person name="Rosenthal A."/>
            <person name="Cox E.C."/>
            <person name="Chisholm R.L."/>
            <person name="Gibbs R.A."/>
            <person name="Loomis W.F."/>
            <person name="Platzer M."/>
            <person name="Kay R.R."/>
            <person name="Williams J.G."/>
            <person name="Dear P.H."/>
            <person name="Noegel A.A."/>
            <person name="Barrell B.G."/>
            <person name="Kuspa A."/>
        </authorList>
    </citation>
    <scope>NUCLEOTIDE SEQUENCE [LARGE SCALE GENOMIC DNA]</scope>
    <source>
        <strain>AX4</strain>
    </source>
</reference>
<reference key="5">
    <citation type="journal article" date="1985" name="Mol. Cell. Biol.">
        <title>Structure of the promoter of the Dictyostelium discoideum prespore EB4 gene.</title>
        <authorList>
            <person name="Barklis E."/>
            <person name="Pontius B."/>
            <person name="Barfield K."/>
            <person name="Lodish H.F."/>
        </authorList>
    </citation>
    <scope>NUCLEOTIDE SEQUENCE [GENOMIC DNA] OF 252-284</scope>
</reference>
<sequence length="514" mass="55447">MRLYLLSLILVFYASVSSASLDSVNFGRGGGWGSGNQGVLCGTHYCPPGSTCESKHGHYICRPGGLITAPSGGDSGGIWTGGDKHKKDCGGTGCCKEGQYCTKLDGKEQCVYYPDDKGPQCGGSFCREGEICVLEHGVLGCLENPVEDSKANCGLFHCNYNEYCIMVNGYLQCLFSNGTAPFACGLQTCVPPQLCVKVENCQQCVSPPRPDNNCGDKYCDDEHQCVRKGLGYECIPKRLTCETKKCEASQVCIMVNGDAQCIVPPAAAAAEIRINNFRFNRNSVQRNAKPAQQQRSAQHAKPAQHGKPAQHATQQQHAKPAQNAKPVQHNAQQQHAKPAQHAAQQQHAKPAQHVAQQQQQQHAKPAAHTAAKPVQHNAQQQHAKPAAHTAAKPVQHNAAQQHAKPAAHGAKPAVNAARPVQHNAAQQHAKPAAHTAAKPVQHNAAQQHAKPAAKPAKLTNAQKLQQEHQRQEALAKQQARIRQQNLVKQAAQKKQTSQRAASKNQARPATQKRN</sequence>
<feature type="signal peptide" evidence="1">
    <location>
        <begin position="1"/>
        <end position="18"/>
    </location>
</feature>
<feature type="chain" id="PRO_0000032669" description="Prespore vesicle protein">
    <location>
        <begin position="19"/>
        <end position="514"/>
    </location>
</feature>
<feature type="domain" description="Follistatin-like 1">
    <location>
        <begin position="40"/>
        <end position="62"/>
    </location>
</feature>
<feature type="domain" description="Follistatin-like 2">
    <location>
        <begin position="240"/>
        <end position="262"/>
    </location>
</feature>
<feature type="region of interest" description="Disordered" evidence="2">
    <location>
        <begin position="285"/>
        <end position="514"/>
    </location>
</feature>
<feature type="compositionally biased region" description="Polar residues" evidence="2">
    <location>
        <begin position="285"/>
        <end position="297"/>
    </location>
</feature>
<feature type="compositionally biased region" description="Low complexity" evidence="2">
    <location>
        <begin position="328"/>
        <end position="391"/>
    </location>
</feature>
<feature type="compositionally biased region" description="Low complexity" evidence="2">
    <location>
        <begin position="398"/>
        <end position="413"/>
    </location>
</feature>
<feature type="compositionally biased region" description="Low complexity" evidence="2">
    <location>
        <begin position="424"/>
        <end position="457"/>
    </location>
</feature>
<feature type="compositionally biased region" description="Polar residues" evidence="2">
    <location>
        <begin position="480"/>
        <end position="508"/>
    </location>
</feature>
<feature type="sequence conflict" description="In Ref. 1; CAA40438." evidence="3" ref="1">
    <location>
        <position position="409"/>
    </location>
</feature>
<protein>
    <recommendedName>
        <fullName>Prespore vesicle protein</fullName>
        <shortName>PSV</shortName>
    </recommendedName>
</protein>
<evidence type="ECO:0000255" key="1"/>
<evidence type="ECO:0000256" key="2">
    <source>
        <dbReference type="SAM" id="MobiDB-lite"/>
    </source>
</evidence>
<evidence type="ECO:0000305" key="3"/>
<keyword id="KW-0217">Developmental protein</keyword>
<keyword id="KW-0221">Differentiation</keyword>
<keyword id="KW-1185">Reference proteome</keyword>
<keyword id="KW-0677">Repeat</keyword>
<keyword id="KW-0732">Signal</keyword>
<keyword id="KW-0749">Sporulation</keyword>
<accession>P08798</accession>
<accession>P32258</accession>
<accession>Q550G6</accession>
<accession>Q86AZ4</accession>
<comment type="developmental stage">
    <text>Accumulates only in prespore cells.</text>
</comment>
<dbReference type="EMBL" id="X57149">
    <property type="protein sequence ID" value="CAA40438.1"/>
    <property type="molecule type" value="Genomic_DNA"/>
</dbReference>
<dbReference type="EMBL" id="AAFI02000019">
    <property type="protein sequence ID" value="EAL68936.1"/>
    <property type="molecule type" value="Genomic_DNA"/>
</dbReference>
<dbReference type="EMBL" id="M11028">
    <property type="protein sequence ID" value="AAA33204.1"/>
    <property type="status" value="ALT_SEQ"/>
    <property type="molecule type" value="Genomic_DNA"/>
</dbReference>
<dbReference type="PIR" id="S28358">
    <property type="entry name" value="S28358"/>
</dbReference>
<dbReference type="RefSeq" id="XP_642966.1">
    <property type="nucleotide sequence ID" value="XM_637874.1"/>
</dbReference>
<dbReference type="STRING" id="44689.P08798"/>
<dbReference type="PaxDb" id="44689-DDB0185116"/>
<dbReference type="EnsemblProtists" id="EAL68936">
    <property type="protein sequence ID" value="EAL68936"/>
    <property type="gene ID" value="DDB_G0276869"/>
</dbReference>
<dbReference type="GeneID" id="8620836"/>
<dbReference type="KEGG" id="ddi:DDB_G0276869"/>
<dbReference type="dictyBase" id="DDB_G0276869">
    <property type="gene designation" value="psvA"/>
</dbReference>
<dbReference type="VEuPathDB" id="AmoebaDB:DDB_G0276869"/>
<dbReference type="eggNOG" id="ENOG502RSQ2">
    <property type="taxonomic scope" value="Eukaryota"/>
</dbReference>
<dbReference type="HOGENOM" id="CLU_530453_0_0_1"/>
<dbReference type="InParanoid" id="P08798"/>
<dbReference type="OMA" id="AKPVQHN"/>
<dbReference type="PRO" id="PR:P08798"/>
<dbReference type="Proteomes" id="UP000002195">
    <property type="component" value="Chromosome 2"/>
</dbReference>
<dbReference type="GO" id="GO:0031160">
    <property type="term" value="C:spore wall"/>
    <property type="evidence" value="ECO:0000314"/>
    <property type="project" value="dictyBase"/>
</dbReference>
<dbReference type="GO" id="GO:0012506">
    <property type="term" value="C:vesicle membrane"/>
    <property type="evidence" value="ECO:0000314"/>
    <property type="project" value="dictyBase"/>
</dbReference>
<dbReference type="GO" id="GO:0030248">
    <property type="term" value="F:cellulose binding"/>
    <property type="evidence" value="ECO:0000314"/>
    <property type="project" value="dictyBase"/>
</dbReference>
<dbReference type="GO" id="GO:0030154">
    <property type="term" value="P:cell differentiation"/>
    <property type="evidence" value="ECO:0007669"/>
    <property type="project" value="UniProtKB-KW"/>
</dbReference>
<dbReference type="GO" id="GO:0030435">
    <property type="term" value="P:sporulation resulting in formation of a cellular spore"/>
    <property type="evidence" value="ECO:0000305"/>
    <property type="project" value="dictyBase"/>
</dbReference>
<dbReference type="InterPro" id="IPR003645">
    <property type="entry name" value="Fol_N"/>
</dbReference>
<dbReference type="InterPro" id="IPR053097">
    <property type="entry name" value="Prespore_vesicle_assoc"/>
</dbReference>
<dbReference type="PANTHER" id="PTHR34586:SF5">
    <property type="entry name" value="PRESPORE VESICLE PROTEIN"/>
    <property type="match status" value="1"/>
</dbReference>
<dbReference type="PANTHER" id="PTHR34586">
    <property type="entry name" value="SPERACT/SCAVENGER RECEPTOR DOMAIN-CONTAINING PROTEIN"/>
    <property type="match status" value="1"/>
</dbReference>
<dbReference type="SMART" id="SM00274">
    <property type="entry name" value="FOLN"/>
    <property type="match status" value="2"/>
</dbReference>
<name>PSV_DICDI</name>
<proteinExistence type="evidence at transcript level"/>
<organism>
    <name type="scientific">Dictyostelium discoideum</name>
    <name type="common">Social amoeba</name>
    <dbReference type="NCBI Taxonomy" id="44689"/>
    <lineage>
        <taxon>Eukaryota</taxon>
        <taxon>Amoebozoa</taxon>
        <taxon>Evosea</taxon>
        <taxon>Eumycetozoa</taxon>
        <taxon>Dictyostelia</taxon>
        <taxon>Dictyosteliales</taxon>
        <taxon>Dictyosteliaceae</taxon>
        <taxon>Dictyostelium</taxon>
    </lineage>
</organism>